<gene>
    <name type="ordered locus">SACOL2497</name>
</gene>
<accession>Q5HD65</accession>
<reference key="1">
    <citation type="journal article" date="2005" name="J. Bacteriol.">
        <title>Insights on evolution of virulence and resistance from the complete genome analysis of an early methicillin-resistant Staphylococcus aureus strain and a biofilm-producing methicillin-resistant Staphylococcus epidermidis strain.</title>
        <authorList>
            <person name="Gill S.R."/>
            <person name="Fouts D.E."/>
            <person name="Archer G.L."/>
            <person name="Mongodin E.F."/>
            <person name="DeBoy R.T."/>
            <person name="Ravel J."/>
            <person name="Paulsen I.T."/>
            <person name="Kolonay J.F."/>
            <person name="Brinkac L.M."/>
            <person name="Beanan M.J."/>
            <person name="Dodson R.J."/>
            <person name="Daugherty S.C."/>
            <person name="Madupu R."/>
            <person name="Angiuoli S.V."/>
            <person name="Durkin A.S."/>
            <person name="Haft D.H."/>
            <person name="Vamathevan J.J."/>
            <person name="Khouri H."/>
            <person name="Utterback T.R."/>
            <person name="Lee C."/>
            <person name="Dimitrov G."/>
            <person name="Jiang L."/>
            <person name="Qin H."/>
            <person name="Weidman J."/>
            <person name="Tran K."/>
            <person name="Kang K.H."/>
            <person name="Hance I.R."/>
            <person name="Nelson K.E."/>
            <person name="Fraser C.M."/>
        </authorList>
    </citation>
    <scope>NUCLEOTIDE SEQUENCE [LARGE SCALE GENOMIC DNA]</scope>
    <source>
        <strain>COL</strain>
    </source>
</reference>
<feature type="signal peptide" evidence="1">
    <location>
        <begin position="1"/>
        <end position="22"/>
    </location>
</feature>
<feature type="chain" id="PRO_0000282107" description="Uncharacterized lipoprotein SACOL2497">
    <location>
        <begin position="23"/>
        <end position="261"/>
    </location>
</feature>
<feature type="lipid moiety-binding region" description="N-palmitoyl cysteine" evidence="1">
    <location>
        <position position="23"/>
    </location>
</feature>
<feature type="lipid moiety-binding region" description="S-diacylglycerol cysteine" evidence="1">
    <location>
        <position position="23"/>
    </location>
</feature>
<name>Y2497_STAAC</name>
<protein>
    <recommendedName>
        <fullName>Uncharacterized lipoprotein SACOL2497</fullName>
    </recommendedName>
</protein>
<evidence type="ECO:0000255" key="1">
    <source>
        <dbReference type="PROSITE-ProRule" id="PRU00303"/>
    </source>
</evidence>
<evidence type="ECO:0000305" key="2"/>
<comment type="subcellular location">
    <subcellularLocation>
        <location evidence="1">Cell membrane</location>
        <topology evidence="1">Lipid-anchor</topology>
    </subcellularLocation>
</comment>
<comment type="similarity">
    <text evidence="2">Belongs to the staphylococcal tandem lipoprotein family.</text>
</comment>
<organism>
    <name type="scientific">Staphylococcus aureus (strain COL)</name>
    <dbReference type="NCBI Taxonomy" id="93062"/>
    <lineage>
        <taxon>Bacteria</taxon>
        <taxon>Bacillati</taxon>
        <taxon>Bacillota</taxon>
        <taxon>Bacilli</taxon>
        <taxon>Bacillales</taxon>
        <taxon>Staphylococcaceae</taxon>
        <taxon>Staphylococcus</taxon>
    </lineage>
</organism>
<keyword id="KW-1003">Cell membrane</keyword>
<keyword id="KW-0449">Lipoprotein</keyword>
<keyword id="KW-0472">Membrane</keyword>
<keyword id="KW-0564">Palmitate</keyword>
<keyword id="KW-0732">Signal</keyword>
<proteinExistence type="inferred from homology"/>
<sequence length="261" mass="30309">MIHSKKLTLGICLVLLIILIGGCVIMTKTNGRNAQIKENFNKTLSVYPTKNLDDFYDKEGFRDQEFDKRDKGTWIIYSEMVIEPKGKNMESRGMVLYINRNTRTTKGNFIVTEITEDSKGYSRSKEKKYPVKMENNRIIPTKPIPDDKLKKEIENFKFFVQYGNFKDFKDYKNGDISYNPNVPSYSAKYQLNNDDYNVQQLRKRYHIPTKQAPELKLKGSGNLKGSSVGSKDLEFTFVENQEENIYFSDSVEFTPSEDDKS</sequence>
<dbReference type="EMBL" id="CP000046">
    <property type="protein sequence ID" value="AAW37276.1"/>
    <property type="molecule type" value="Genomic_DNA"/>
</dbReference>
<dbReference type="RefSeq" id="WP_000581876.1">
    <property type="nucleotide sequence ID" value="NZ_JBGOFO010000004.1"/>
</dbReference>
<dbReference type="SMR" id="Q5HD65"/>
<dbReference type="KEGG" id="sac:SACOL2497"/>
<dbReference type="HOGENOM" id="CLU_071589_0_1_9"/>
<dbReference type="Proteomes" id="UP000000530">
    <property type="component" value="Chromosome"/>
</dbReference>
<dbReference type="GO" id="GO:0005886">
    <property type="term" value="C:plasma membrane"/>
    <property type="evidence" value="ECO:0007669"/>
    <property type="project" value="UniProtKB-SubCell"/>
</dbReference>
<dbReference type="Gene3D" id="2.50.20.40">
    <property type="match status" value="1"/>
</dbReference>
<dbReference type="InterPro" id="IPR007595">
    <property type="entry name" value="Csa"/>
</dbReference>
<dbReference type="InterPro" id="IPR038641">
    <property type="entry name" value="Csa_sf"/>
</dbReference>
<dbReference type="NCBIfam" id="TIGR01742">
    <property type="entry name" value="SA_tandem_lipo"/>
    <property type="match status" value="1"/>
</dbReference>
<dbReference type="Pfam" id="PF04507">
    <property type="entry name" value="DUF576"/>
    <property type="match status" value="1"/>
</dbReference>
<dbReference type="PROSITE" id="PS51257">
    <property type="entry name" value="PROKAR_LIPOPROTEIN"/>
    <property type="match status" value="1"/>
</dbReference>